<gene>
    <name evidence="2" type="primary">ddl</name>
    <name type="ordered locus">RF_1035</name>
</gene>
<sequence length="321" mass="35914">MNKYQTHWVEHSEVKILSTTGKKHIALVAGGMSAEREVSLVSSEGVSKALIELGYKVTFIDMGADIAVKLQEIKPDIVFNCLHGTYGEDGCLPGLLNIMRIPYTHSGVLSSALAFDKIHSRSWFLTNNINMAESIIVNKSDNIKSDPVKRPYVIKPLTQGSSIGVEVIFEEDDFNFADYNFPYGYQVIIEQYIKGRELQVAVLNGKALGALEIKLLKNRFYDYETKYTEGFAEHLCPAPLPTNLYEKLLVESEKIYKTMNCKGPARAEFILEEQTNKLYALEINTHPGMTPLSIVPEIAAYAGINFTNLIEEIIKTASFES</sequence>
<proteinExistence type="inferred from homology"/>
<feature type="chain" id="PRO_0000277918" description="D-alanine--D-alanine ligase">
    <location>
        <begin position="1"/>
        <end position="321"/>
    </location>
</feature>
<feature type="domain" description="ATP-grasp" evidence="2">
    <location>
        <begin position="121"/>
        <end position="315"/>
    </location>
</feature>
<feature type="binding site" evidence="2">
    <location>
        <begin position="147"/>
        <end position="199"/>
    </location>
    <ligand>
        <name>ATP</name>
        <dbReference type="ChEBI" id="CHEBI:30616"/>
    </ligand>
</feature>
<feature type="binding site" evidence="2">
    <location>
        <position position="268"/>
    </location>
    <ligand>
        <name>Mg(2+)</name>
        <dbReference type="ChEBI" id="CHEBI:18420"/>
        <label>1</label>
    </ligand>
</feature>
<feature type="binding site" evidence="2">
    <location>
        <position position="282"/>
    </location>
    <ligand>
        <name>Mg(2+)</name>
        <dbReference type="ChEBI" id="CHEBI:18420"/>
        <label>1</label>
    </ligand>
</feature>
<feature type="binding site" evidence="2">
    <location>
        <position position="282"/>
    </location>
    <ligand>
        <name>Mg(2+)</name>
        <dbReference type="ChEBI" id="CHEBI:18420"/>
        <label>2</label>
    </ligand>
</feature>
<feature type="binding site" evidence="2">
    <location>
        <position position="284"/>
    </location>
    <ligand>
        <name>Mg(2+)</name>
        <dbReference type="ChEBI" id="CHEBI:18420"/>
        <label>2</label>
    </ligand>
</feature>
<comment type="function">
    <text evidence="2">Cell wall formation.</text>
</comment>
<comment type="catalytic activity">
    <reaction evidence="2">
        <text>2 D-alanine + ATP = D-alanyl-D-alanine + ADP + phosphate + H(+)</text>
        <dbReference type="Rhea" id="RHEA:11224"/>
        <dbReference type="ChEBI" id="CHEBI:15378"/>
        <dbReference type="ChEBI" id="CHEBI:30616"/>
        <dbReference type="ChEBI" id="CHEBI:43474"/>
        <dbReference type="ChEBI" id="CHEBI:57416"/>
        <dbReference type="ChEBI" id="CHEBI:57822"/>
        <dbReference type="ChEBI" id="CHEBI:456216"/>
        <dbReference type="EC" id="6.3.2.4"/>
    </reaction>
</comment>
<comment type="cofactor">
    <cofactor evidence="1">
        <name>Mg(2+)</name>
        <dbReference type="ChEBI" id="CHEBI:18420"/>
    </cofactor>
    <cofactor evidence="1">
        <name>Mn(2+)</name>
        <dbReference type="ChEBI" id="CHEBI:29035"/>
    </cofactor>
    <text evidence="1">Binds 2 magnesium or manganese ions per subunit.</text>
</comment>
<comment type="pathway">
    <text evidence="2">Cell wall biogenesis; peptidoglycan biosynthesis.</text>
</comment>
<comment type="subcellular location">
    <subcellularLocation>
        <location evidence="2">Cytoplasm</location>
    </subcellularLocation>
</comment>
<comment type="similarity">
    <text evidence="2">Belongs to the D-alanine--D-alanine ligase family.</text>
</comment>
<evidence type="ECO:0000250" key="1"/>
<evidence type="ECO:0000255" key="2">
    <source>
        <dbReference type="HAMAP-Rule" id="MF_00047"/>
    </source>
</evidence>
<name>DDL_RICFE</name>
<organism>
    <name type="scientific">Rickettsia felis (strain ATCC VR-1525 / URRWXCal2)</name>
    <name type="common">Rickettsia azadi</name>
    <dbReference type="NCBI Taxonomy" id="315456"/>
    <lineage>
        <taxon>Bacteria</taxon>
        <taxon>Pseudomonadati</taxon>
        <taxon>Pseudomonadota</taxon>
        <taxon>Alphaproteobacteria</taxon>
        <taxon>Rickettsiales</taxon>
        <taxon>Rickettsiaceae</taxon>
        <taxon>Rickettsieae</taxon>
        <taxon>Rickettsia</taxon>
        <taxon>spotted fever group</taxon>
    </lineage>
</organism>
<reference key="1">
    <citation type="journal article" date="2005" name="PLoS Biol.">
        <title>The genome sequence of Rickettsia felis identifies the first putative conjugative plasmid in an obligate intracellular parasite.</title>
        <authorList>
            <person name="Ogata H."/>
            <person name="Renesto P."/>
            <person name="Audic S."/>
            <person name="Robert C."/>
            <person name="Blanc G."/>
            <person name="Fournier P.-E."/>
            <person name="Parinello H."/>
            <person name="Claverie J.-M."/>
            <person name="Raoult D."/>
        </authorList>
    </citation>
    <scope>NUCLEOTIDE SEQUENCE [LARGE SCALE GENOMIC DNA]</scope>
    <source>
        <strain>ATCC VR-1525 / URRWXCal2</strain>
    </source>
</reference>
<accession>Q4UKP1</accession>
<dbReference type="EC" id="6.3.2.4" evidence="2"/>
<dbReference type="EMBL" id="CP000053">
    <property type="protein sequence ID" value="AAY61886.1"/>
    <property type="molecule type" value="Genomic_DNA"/>
</dbReference>
<dbReference type="SMR" id="Q4UKP1"/>
<dbReference type="STRING" id="315456.RF_1035"/>
<dbReference type="KEGG" id="rfe:RF_1035"/>
<dbReference type="eggNOG" id="COG1181">
    <property type="taxonomic scope" value="Bacteria"/>
</dbReference>
<dbReference type="HOGENOM" id="CLU_039268_1_1_5"/>
<dbReference type="OrthoDB" id="9813261at2"/>
<dbReference type="UniPathway" id="UPA00219"/>
<dbReference type="Proteomes" id="UP000008548">
    <property type="component" value="Chromosome"/>
</dbReference>
<dbReference type="GO" id="GO:0005737">
    <property type="term" value="C:cytoplasm"/>
    <property type="evidence" value="ECO:0007669"/>
    <property type="project" value="UniProtKB-SubCell"/>
</dbReference>
<dbReference type="GO" id="GO:0005524">
    <property type="term" value="F:ATP binding"/>
    <property type="evidence" value="ECO:0007669"/>
    <property type="project" value="UniProtKB-KW"/>
</dbReference>
<dbReference type="GO" id="GO:0008716">
    <property type="term" value="F:D-alanine-D-alanine ligase activity"/>
    <property type="evidence" value="ECO:0007669"/>
    <property type="project" value="UniProtKB-UniRule"/>
</dbReference>
<dbReference type="GO" id="GO:0046872">
    <property type="term" value="F:metal ion binding"/>
    <property type="evidence" value="ECO:0007669"/>
    <property type="project" value="UniProtKB-KW"/>
</dbReference>
<dbReference type="GO" id="GO:0071555">
    <property type="term" value="P:cell wall organization"/>
    <property type="evidence" value="ECO:0007669"/>
    <property type="project" value="UniProtKB-KW"/>
</dbReference>
<dbReference type="GO" id="GO:0009252">
    <property type="term" value="P:peptidoglycan biosynthetic process"/>
    <property type="evidence" value="ECO:0007669"/>
    <property type="project" value="UniProtKB-UniRule"/>
</dbReference>
<dbReference type="GO" id="GO:0008360">
    <property type="term" value="P:regulation of cell shape"/>
    <property type="evidence" value="ECO:0007669"/>
    <property type="project" value="UniProtKB-KW"/>
</dbReference>
<dbReference type="Gene3D" id="3.40.50.20">
    <property type="match status" value="1"/>
</dbReference>
<dbReference type="Gene3D" id="3.30.1490.20">
    <property type="entry name" value="ATP-grasp fold, A domain"/>
    <property type="match status" value="1"/>
</dbReference>
<dbReference type="Gene3D" id="3.30.470.20">
    <property type="entry name" value="ATP-grasp fold, B domain"/>
    <property type="match status" value="1"/>
</dbReference>
<dbReference type="HAMAP" id="MF_00047">
    <property type="entry name" value="Dala_Dala_lig"/>
    <property type="match status" value="1"/>
</dbReference>
<dbReference type="InterPro" id="IPR011761">
    <property type="entry name" value="ATP-grasp"/>
</dbReference>
<dbReference type="InterPro" id="IPR013815">
    <property type="entry name" value="ATP_grasp_subdomain_1"/>
</dbReference>
<dbReference type="InterPro" id="IPR000291">
    <property type="entry name" value="D-Ala_lig_Van_CS"/>
</dbReference>
<dbReference type="InterPro" id="IPR005905">
    <property type="entry name" value="D_ala_D_ala"/>
</dbReference>
<dbReference type="InterPro" id="IPR011095">
    <property type="entry name" value="Dala_Dala_lig_C"/>
</dbReference>
<dbReference type="InterPro" id="IPR011127">
    <property type="entry name" value="Dala_Dala_lig_N"/>
</dbReference>
<dbReference type="InterPro" id="IPR016185">
    <property type="entry name" value="PreATP-grasp_dom_sf"/>
</dbReference>
<dbReference type="NCBIfam" id="TIGR01205">
    <property type="entry name" value="D_ala_D_alaTIGR"/>
    <property type="match status" value="1"/>
</dbReference>
<dbReference type="NCBIfam" id="NF002378">
    <property type="entry name" value="PRK01372.1"/>
    <property type="match status" value="1"/>
</dbReference>
<dbReference type="PANTHER" id="PTHR23132">
    <property type="entry name" value="D-ALANINE--D-ALANINE LIGASE"/>
    <property type="match status" value="1"/>
</dbReference>
<dbReference type="PANTHER" id="PTHR23132:SF23">
    <property type="entry name" value="D-ALANINE--D-ALANINE LIGASE B"/>
    <property type="match status" value="1"/>
</dbReference>
<dbReference type="Pfam" id="PF07478">
    <property type="entry name" value="Dala_Dala_lig_C"/>
    <property type="match status" value="1"/>
</dbReference>
<dbReference type="Pfam" id="PF01820">
    <property type="entry name" value="Dala_Dala_lig_N"/>
    <property type="match status" value="1"/>
</dbReference>
<dbReference type="PIRSF" id="PIRSF039102">
    <property type="entry name" value="Ddl/VanB"/>
    <property type="match status" value="1"/>
</dbReference>
<dbReference type="SUPFAM" id="SSF56059">
    <property type="entry name" value="Glutathione synthetase ATP-binding domain-like"/>
    <property type="match status" value="1"/>
</dbReference>
<dbReference type="SUPFAM" id="SSF52440">
    <property type="entry name" value="PreATP-grasp domain"/>
    <property type="match status" value="1"/>
</dbReference>
<dbReference type="PROSITE" id="PS50975">
    <property type="entry name" value="ATP_GRASP"/>
    <property type="match status" value="1"/>
</dbReference>
<dbReference type="PROSITE" id="PS00843">
    <property type="entry name" value="DALA_DALA_LIGASE_1"/>
    <property type="match status" value="1"/>
</dbReference>
<dbReference type="PROSITE" id="PS00844">
    <property type="entry name" value="DALA_DALA_LIGASE_2"/>
    <property type="match status" value="1"/>
</dbReference>
<protein>
    <recommendedName>
        <fullName evidence="2">D-alanine--D-alanine ligase</fullName>
        <ecNumber evidence="2">6.3.2.4</ecNumber>
    </recommendedName>
    <alternativeName>
        <fullName evidence="2">D-Ala-D-Ala ligase</fullName>
    </alternativeName>
    <alternativeName>
        <fullName evidence="2">D-alanylalanine synthetase</fullName>
    </alternativeName>
</protein>
<keyword id="KW-0067">ATP-binding</keyword>
<keyword id="KW-0133">Cell shape</keyword>
<keyword id="KW-0961">Cell wall biogenesis/degradation</keyword>
<keyword id="KW-0963">Cytoplasm</keyword>
<keyword id="KW-0436">Ligase</keyword>
<keyword id="KW-0460">Magnesium</keyword>
<keyword id="KW-0464">Manganese</keyword>
<keyword id="KW-0479">Metal-binding</keyword>
<keyword id="KW-0547">Nucleotide-binding</keyword>
<keyword id="KW-0573">Peptidoglycan synthesis</keyword>